<reference key="1">
    <citation type="submission" date="2007-10" db="EMBL/GenBank/DDBJ databases">
        <title>Brucella canis ATCC 23365 whole genome shotgun sequencing project.</title>
        <authorList>
            <person name="Setubal J.C."/>
            <person name="Bowns C."/>
            <person name="Boyle S."/>
            <person name="Crasta O.R."/>
            <person name="Czar M.J."/>
            <person name="Dharmanolla C."/>
            <person name="Gillespie J.J."/>
            <person name="Kenyon R.W."/>
            <person name="Lu J."/>
            <person name="Mane S."/>
            <person name="Mohapatra S."/>
            <person name="Nagrani S."/>
            <person name="Purkayastha A."/>
            <person name="Rajasimha H.K."/>
            <person name="Shallom J.M."/>
            <person name="Shallom S."/>
            <person name="Shukla M."/>
            <person name="Snyder E.E."/>
            <person name="Sobral B.W."/>
            <person name="Wattam A.R."/>
            <person name="Will R."/>
            <person name="Williams K."/>
            <person name="Yoo H."/>
            <person name="Bruce D."/>
            <person name="Detter C."/>
            <person name="Munk C."/>
            <person name="Brettin T.S."/>
        </authorList>
    </citation>
    <scope>NUCLEOTIDE SEQUENCE [LARGE SCALE GENOMIC DNA]</scope>
    <source>
        <strain>ATCC 23365 / NCTC 10854 / RM-666</strain>
    </source>
</reference>
<feature type="chain" id="PRO_0000340184" description="Sulfate adenylyltransferase subunit 2">
    <location>
        <begin position="1"/>
        <end position="300"/>
    </location>
</feature>
<feature type="region of interest" description="Disordered" evidence="2">
    <location>
        <begin position="281"/>
        <end position="300"/>
    </location>
</feature>
<sequence length="300" mass="34743">MKNLTHLQRLEAEAIHVFREVAATFSNPVMLYSVGKDSSVMLHLAMKAFYPAPPPFPFLHVDTTWKFREMIEFRDAQAREKGFELLVHVNEQGVRDGIGPFTHGSNVHTHIMKTVGLRQALDKYRFDAAFGGARRDEEKSRAKERIFSFRNAQHGWDPKNQRPEMWKIYNTRVSKGESIRVFPLSNWTELDIWQYILQENIPIVPLYFAARRPVVERDGMLIMVDDDRMKLRPGEQVENRLVRFRTLGCYPLTGAIPSSAANLSDIVEEMLIARTSERQGRAIDRDEAGSMEKKKREGYF</sequence>
<gene>
    <name evidence="1" type="primary">cysD</name>
    <name type="ordered locus">BCAN_A0197</name>
</gene>
<evidence type="ECO:0000255" key="1">
    <source>
        <dbReference type="HAMAP-Rule" id="MF_00064"/>
    </source>
</evidence>
<evidence type="ECO:0000256" key="2">
    <source>
        <dbReference type="SAM" id="MobiDB-lite"/>
    </source>
</evidence>
<name>CYSD_BRUC2</name>
<organism>
    <name type="scientific">Brucella canis (strain ATCC 23365 / NCTC 10854 / RM-666)</name>
    <dbReference type="NCBI Taxonomy" id="483179"/>
    <lineage>
        <taxon>Bacteria</taxon>
        <taxon>Pseudomonadati</taxon>
        <taxon>Pseudomonadota</taxon>
        <taxon>Alphaproteobacteria</taxon>
        <taxon>Hyphomicrobiales</taxon>
        <taxon>Brucellaceae</taxon>
        <taxon>Brucella/Ochrobactrum group</taxon>
        <taxon>Brucella</taxon>
    </lineage>
</organism>
<comment type="function">
    <text evidence="1">With CysN forms the ATP sulfurylase (ATPS) that catalyzes the adenylation of sulfate producing adenosine 5'-phosphosulfate (APS) and diphosphate, the first enzymatic step in sulfur assimilation pathway. APS synthesis involves the formation of a high-energy phosphoric-sulfuric acid anhydride bond driven by GTP hydrolysis by CysN coupled to ATP hydrolysis by CysD.</text>
</comment>
<comment type="catalytic activity">
    <reaction evidence="1">
        <text>sulfate + ATP + H(+) = adenosine 5'-phosphosulfate + diphosphate</text>
        <dbReference type="Rhea" id="RHEA:18133"/>
        <dbReference type="ChEBI" id="CHEBI:15378"/>
        <dbReference type="ChEBI" id="CHEBI:16189"/>
        <dbReference type="ChEBI" id="CHEBI:30616"/>
        <dbReference type="ChEBI" id="CHEBI:33019"/>
        <dbReference type="ChEBI" id="CHEBI:58243"/>
        <dbReference type="EC" id="2.7.7.4"/>
    </reaction>
</comment>
<comment type="pathway">
    <text evidence="1">Sulfur metabolism; hydrogen sulfide biosynthesis; sulfite from sulfate: step 1/3.</text>
</comment>
<comment type="subunit">
    <text evidence="1">Heterodimer composed of CysD, the smaller subunit, and CysN.</text>
</comment>
<comment type="similarity">
    <text evidence="1">Belongs to the PAPS reductase family. CysD subfamily.</text>
</comment>
<dbReference type="EC" id="2.7.7.4" evidence="1"/>
<dbReference type="EMBL" id="CP000872">
    <property type="protein sequence ID" value="ABX61296.1"/>
    <property type="molecule type" value="Genomic_DNA"/>
</dbReference>
<dbReference type="SMR" id="A9M7D7"/>
<dbReference type="KEGG" id="bcs:BCAN_A0197"/>
<dbReference type="HOGENOM" id="CLU_043026_0_0_5"/>
<dbReference type="UniPathway" id="UPA00140">
    <property type="reaction ID" value="UER00204"/>
</dbReference>
<dbReference type="Proteomes" id="UP000001385">
    <property type="component" value="Chromosome I"/>
</dbReference>
<dbReference type="GO" id="GO:0005524">
    <property type="term" value="F:ATP binding"/>
    <property type="evidence" value="ECO:0007669"/>
    <property type="project" value="UniProtKB-KW"/>
</dbReference>
<dbReference type="GO" id="GO:0004781">
    <property type="term" value="F:sulfate adenylyltransferase (ATP) activity"/>
    <property type="evidence" value="ECO:0007669"/>
    <property type="project" value="UniProtKB-UniRule"/>
</dbReference>
<dbReference type="GO" id="GO:0070814">
    <property type="term" value="P:hydrogen sulfide biosynthetic process"/>
    <property type="evidence" value="ECO:0007669"/>
    <property type="project" value="UniProtKB-UniRule"/>
</dbReference>
<dbReference type="GO" id="GO:0000103">
    <property type="term" value="P:sulfate assimilation"/>
    <property type="evidence" value="ECO:0007669"/>
    <property type="project" value="UniProtKB-UniRule"/>
</dbReference>
<dbReference type="CDD" id="cd23946">
    <property type="entry name" value="Sulfate_adenylyltransferase_2"/>
    <property type="match status" value="1"/>
</dbReference>
<dbReference type="FunFam" id="3.40.50.620:FF:000002">
    <property type="entry name" value="Sulfate adenylyltransferase subunit 2"/>
    <property type="match status" value="1"/>
</dbReference>
<dbReference type="Gene3D" id="3.40.50.620">
    <property type="entry name" value="HUPs"/>
    <property type="match status" value="1"/>
</dbReference>
<dbReference type="HAMAP" id="MF_00064">
    <property type="entry name" value="Sulf_adenylyltr_sub2"/>
    <property type="match status" value="1"/>
</dbReference>
<dbReference type="InterPro" id="IPR002500">
    <property type="entry name" value="PAPS_reduct_dom"/>
</dbReference>
<dbReference type="InterPro" id="IPR014729">
    <property type="entry name" value="Rossmann-like_a/b/a_fold"/>
</dbReference>
<dbReference type="InterPro" id="IPR011784">
    <property type="entry name" value="SO4_adenylTrfase_ssu"/>
</dbReference>
<dbReference type="InterPro" id="IPR050128">
    <property type="entry name" value="Sulfate_adenylyltrnsfr_sub2"/>
</dbReference>
<dbReference type="NCBIfam" id="TIGR02039">
    <property type="entry name" value="CysD"/>
    <property type="match status" value="1"/>
</dbReference>
<dbReference type="NCBIfam" id="NF003587">
    <property type="entry name" value="PRK05253.1"/>
    <property type="match status" value="1"/>
</dbReference>
<dbReference type="NCBIfam" id="NF009214">
    <property type="entry name" value="PRK12563.1"/>
    <property type="match status" value="1"/>
</dbReference>
<dbReference type="PANTHER" id="PTHR43196">
    <property type="entry name" value="SULFATE ADENYLYLTRANSFERASE SUBUNIT 2"/>
    <property type="match status" value="1"/>
</dbReference>
<dbReference type="PANTHER" id="PTHR43196:SF1">
    <property type="entry name" value="SULFATE ADENYLYLTRANSFERASE SUBUNIT 2"/>
    <property type="match status" value="1"/>
</dbReference>
<dbReference type="Pfam" id="PF01507">
    <property type="entry name" value="PAPS_reduct"/>
    <property type="match status" value="1"/>
</dbReference>
<dbReference type="PIRSF" id="PIRSF002936">
    <property type="entry name" value="CysDAde_trans"/>
    <property type="match status" value="1"/>
</dbReference>
<dbReference type="SUPFAM" id="SSF52402">
    <property type="entry name" value="Adenine nucleotide alpha hydrolases-like"/>
    <property type="match status" value="1"/>
</dbReference>
<protein>
    <recommendedName>
        <fullName evidence="1">Sulfate adenylyltransferase subunit 2</fullName>
        <ecNumber evidence="1">2.7.7.4</ecNumber>
    </recommendedName>
    <alternativeName>
        <fullName evidence="1">ATP-sulfurylase small subunit</fullName>
    </alternativeName>
    <alternativeName>
        <fullName evidence="1">Sulfate adenylate transferase</fullName>
        <shortName evidence="1">SAT</shortName>
    </alternativeName>
</protein>
<proteinExistence type="inferred from homology"/>
<keyword id="KW-0067">ATP-binding</keyword>
<keyword id="KW-0547">Nucleotide-binding</keyword>
<keyword id="KW-0548">Nucleotidyltransferase</keyword>
<keyword id="KW-1185">Reference proteome</keyword>
<keyword id="KW-0808">Transferase</keyword>
<accession>A9M7D7</accession>